<dbReference type="EC" id="2.7.4.6" evidence="1"/>
<dbReference type="EMBL" id="AE004439">
    <property type="protein sequence ID" value="AAK03112.1"/>
    <property type="molecule type" value="Genomic_DNA"/>
</dbReference>
<dbReference type="RefSeq" id="WP_005717335.1">
    <property type="nucleotide sequence ID" value="NC_002663.1"/>
</dbReference>
<dbReference type="SMR" id="Q9CM17"/>
<dbReference type="STRING" id="272843.PM1028"/>
<dbReference type="EnsemblBacteria" id="AAK03112">
    <property type="protein sequence ID" value="AAK03112"/>
    <property type="gene ID" value="PM1028"/>
</dbReference>
<dbReference type="GeneID" id="77206343"/>
<dbReference type="KEGG" id="pmu:PM1028"/>
<dbReference type="HOGENOM" id="CLU_060216_8_1_6"/>
<dbReference type="OrthoDB" id="9801161at2"/>
<dbReference type="Proteomes" id="UP000000809">
    <property type="component" value="Chromosome"/>
</dbReference>
<dbReference type="GO" id="GO:0005737">
    <property type="term" value="C:cytoplasm"/>
    <property type="evidence" value="ECO:0007669"/>
    <property type="project" value="UniProtKB-SubCell"/>
</dbReference>
<dbReference type="GO" id="GO:0005524">
    <property type="term" value="F:ATP binding"/>
    <property type="evidence" value="ECO:0007669"/>
    <property type="project" value="UniProtKB-UniRule"/>
</dbReference>
<dbReference type="GO" id="GO:0046872">
    <property type="term" value="F:metal ion binding"/>
    <property type="evidence" value="ECO:0007669"/>
    <property type="project" value="UniProtKB-KW"/>
</dbReference>
<dbReference type="GO" id="GO:0004550">
    <property type="term" value="F:nucleoside diphosphate kinase activity"/>
    <property type="evidence" value="ECO:0007669"/>
    <property type="project" value="UniProtKB-UniRule"/>
</dbReference>
<dbReference type="GO" id="GO:0006241">
    <property type="term" value="P:CTP biosynthetic process"/>
    <property type="evidence" value="ECO:0007669"/>
    <property type="project" value="UniProtKB-UniRule"/>
</dbReference>
<dbReference type="GO" id="GO:0006183">
    <property type="term" value="P:GTP biosynthetic process"/>
    <property type="evidence" value="ECO:0007669"/>
    <property type="project" value="UniProtKB-UniRule"/>
</dbReference>
<dbReference type="GO" id="GO:0006228">
    <property type="term" value="P:UTP biosynthetic process"/>
    <property type="evidence" value="ECO:0007669"/>
    <property type="project" value="UniProtKB-UniRule"/>
</dbReference>
<dbReference type="CDD" id="cd04413">
    <property type="entry name" value="NDPk_I"/>
    <property type="match status" value="1"/>
</dbReference>
<dbReference type="FunFam" id="3.30.70.141:FF:000003">
    <property type="entry name" value="Nucleoside diphosphate kinase"/>
    <property type="match status" value="1"/>
</dbReference>
<dbReference type="Gene3D" id="3.30.70.141">
    <property type="entry name" value="Nucleoside diphosphate kinase-like domain"/>
    <property type="match status" value="1"/>
</dbReference>
<dbReference type="HAMAP" id="MF_00451">
    <property type="entry name" value="NDP_kinase"/>
    <property type="match status" value="1"/>
</dbReference>
<dbReference type="InterPro" id="IPR034907">
    <property type="entry name" value="NDK-like_dom"/>
</dbReference>
<dbReference type="InterPro" id="IPR036850">
    <property type="entry name" value="NDK-like_dom_sf"/>
</dbReference>
<dbReference type="InterPro" id="IPR001564">
    <property type="entry name" value="Nucleoside_diP_kinase"/>
</dbReference>
<dbReference type="InterPro" id="IPR023005">
    <property type="entry name" value="Nucleoside_diP_kinase_AS"/>
</dbReference>
<dbReference type="NCBIfam" id="NF001908">
    <property type="entry name" value="PRK00668.1"/>
    <property type="match status" value="1"/>
</dbReference>
<dbReference type="PANTHER" id="PTHR46161">
    <property type="entry name" value="NUCLEOSIDE DIPHOSPHATE KINASE"/>
    <property type="match status" value="1"/>
</dbReference>
<dbReference type="PANTHER" id="PTHR46161:SF3">
    <property type="entry name" value="NUCLEOSIDE DIPHOSPHATE KINASE DDB_G0292928-RELATED"/>
    <property type="match status" value="1"/>
</dbReference>
<dbReference type="Pfam" id="PF00334">
    <property type="entry name" value="NDK"/>
    <property type="match status" value="1"/>
</dbReference>
<dbReference type="PRINTS" id="PR01243">
    <property type="entry name" value="NUCDPKINASE"/>
</dbReference>
<dbReference type="SMART" id="SM00562">
    <property type="entry name" value="NDK"/>
    <property type="match status" value="1"/>
</dbReference>
<dbReference type="SUPFAM" id="SSF54919">
    <property type="entry name" value="Nucleoside diphosphate kinase, NDK"/>
    <property type="match status" value="1"/>
</dbReference>
<dbReference type="PROSITE" id="PS00469">
    <property type="entry name" value="NDPK"/>
    <property type="match status" value="1"/>
</dbReference>
<dbReference type="PROSITE" id="PS51374">
    <property type="entry name" value="NDPK_LIKE"/>
    <property type="match status" value="1"/>
</dbReference>
<accession>Q9CM17</accession>
<feature type="chain" id="PRO_0000137017" description="Nucleoside diphosphate kinase">
    <location>
        <begin position="1"/>
        <end position="139"/>
    </location>
</feature>
<feature type="active site" description="Pros-phosphohistidine intermediate" evidence="1">
    <location>
        <position position="117"/>
    </location>
</feature>
<feature type="binding site" evidence="1">
    <location>
        <position position="11"/>
    </location>
    <ligand>
        <name>ATP</name>
        <dbReference type="ChEBI" id="CHEBI:30616"/>
    </ligand>
</feature>
<feature type="binding site" evidence="1">
    <location>
        <position position="59"/>
    </location>
    <ligand>
        <name>ATP</name>
        <dbReference type="ChEBI" id="CHEBI:30616"/>
    </ligand>
</feature>
<feature type="binding site" evidence="1">
    <location>
        <position position="87"/>
    </location>
    <ligand>
        <name>ATP</name>
        <dbReference type="ChEBI" id="CHEBI:30616"/>
    </ligand>
</feature>
<feature type="binding site" evidence="1">
    <location>
        <position position="93"/>
    </location>
    <ligand>
        <name>ATP</name>
        <dbReference type="ChEBI" id="CHEBI:30616"/>
    </ligand>
</feature>
<feature type="binding site" evidence="1">
    <location>
        <position position="104"/>
    </location>
    <ligand>
        <name>ATP</name>
        <dbReference type="ChEBI" id="CHEBI:30616"/>
    </ligand>
</feature>
<feature type="binding site" evidence="1">
    <location>
        <position position="114"/>
    </location>
    <ligand>
        <name>ATP</name>
        <dbReference type="ChEBI" id="CHEBI:30616"/>
    </ligand>
</feature>
<reference key="1">
    <citation type="journal article" date="2001" name="Proc. Natl. Acad. Sci. U.S.A.">
        <title>Complete genomic sequence of Pasteurella multocida Pm70.</title>
        <authorList>
            <person name="May B.J."/>
            <person name="Zhang Q."/>
            <person name="Li L.L."/>
            <person name="Paustian M.L."/>
            <person name="Whittam T.S."/>
            <person name="Kapur V."/>
        </authorList>
    </citation>
    <scope>NUCLEOTIDE SEQUENCE [LARGE SCALE GENOMIC DNA]</scope>
    <source>
        <strain>Pm70</strain>
    </source>
</reference>
<name>NDK_PASMU</name>
<proteinExistence type="inferred from homology"/>
<comment type="function">
    <text evidence="1">Major role in the synthesis of nucleoside triphosphates other than ATP. The ATP gamma phosphate is transferred to the NDP beta phosphate via a ping-pong mechanism, using a phosphorylated active-site intermediate.</text>
</comment>
<comment type="catalytic activity">
    <reaction evidence="1">
        <text>a 2'-deoxyribonucleoside 5'-diphosphate + ATP = a 2'-deoxyribonucleoside 5'-triphosphate + ADP</text>
        <dbReference type="Rhea" id="RHEA:44640"/>
        <dbReference type="ChEBI" id="CHEBI:30616"/>
        <dbReference type="ChEBI" id="CHEBI:61560"/>
        <dbReference type="ChEBI" id="CHEBI:73316"/>
        <dbReference type="ChEBI" id="CHEBI:456216"/>
        <dbReference type="EC" id="2.7.4.6"/>
    </reaction>
</comment>
<comment type="catalytic activity">
    <reaction evidence="1">
        <text>a ribonucleoside 5'-diphosphate + ATP = a ribonucleoside 5'-triphosphate + ADP</text>
        <dbReference type="Rhea" id="RHEA:18113"/>
        <dbReference type="ChEBI" id="CHEBI:30616"/>
        <dbReference type="ChEBI" id="CHEBI:57930"/>
        <dbReference type="ChEBI" id="CHEBI:61557"/>
        <dbReference type="ChEBI" id="CHEBI:456216"/>
        <dbReference type="EC" id="2.7.4.6"/>
    </reaction>
</comment>
<comment type="cofactor">
    <cofactor evidence="1">
        <name>Mg(2+)</name>
        <dbReference type="ChEBI" id="CHEBI:18420"/>
    </cofactor>
</comment>
<comment type="subunit">
    <text evidence="1">Homotetramer.</text>
</comment>
<comment type="subcellular location">
    <subcellularLocation>
        <location evidence="1">Cytoplasm</location>
    </subcellularLocation>
</comment>
<comment type="similarity">
    <text evidence="1">Belongs to the NDK family.</text>
</comment>
<evidence type="ECO:0000255" key="1">
    <source>
        <dbReference type="HAMAP-Rule" id="MF_00451"/>
    </source>
</evidence>
<protein>
    <recommendedName>
        <fullName evidence="1">Nucleoside diphosphate kinase</fullName>
        <shortName evidence="1">NDK</shortName>
        <shortName evidence="1">NDP kinase</shortName>
        <ecNumber evidence="1">2.7.4.6</ecNumber>
    </recommendedName>
    <alternativeName>
        <fullName evidence="1">Nucleoside-2-P kinase</fullName>
    </alternativeName>
</protein>
<gene>
    <name evidence="1" type="primary">ndk</name>
    <name type="ordered locus">PM1028</name>
</gene>
<sequence length="139" mass="15408">MAVERTLSLIKPDAVKRHLIGAILSRFEQAGFRVVAAKMLHLTQAQAEGFYAEHQDKAFFPELVAYMISAPVLALVLEKENAVKDYRTLIGATNPAVAAEGTIRRDFAIDGRHNSVHGSDSLDSAKREIAYFFVESEIF</sequence>
<keyword id="KW-0067">ATP-binding</keyword>
<keyword id="KW-0963">Cytoplasm</keyword>
<keyword id="KW-0418">Kinase</keyword>
<keyword id="KW-0460">Magnesium</keyword>
<keyword id="KW-0479">Metal-binding</keyword>
<keyword id="KW-0546">Nucleotide metabolism</keyword>
<keyword id="KW-0547">Nucleotide-binding</keyword>
<keyword id="KW-0597">Phosphoprotein</keyword>
<keyword id="KW-1185">Reference proteome</keyword>
<keyword id="KW-0808">Transferase</keyword>
<organism>
    <name type="scientific">Pasteurella multocida (strain Pm70)</name>
    <dbReference type="NCBI Taxonomy" id="272843"/>
    <lineage>
        <taxon>Bacteria</taxon>
        <taxon>Pseudomonadati</taxon>
        <taxon>Pseudomonadota</taxon>
        <taxon>Gammaproteobacteria</taxon>
        <taxon>Pasteurellales</taxon>
        <taxon>Pasteurellaceae</taxon>
        <taxon>Pasteurella</taxon>
    </lineage>
</organism>